<feature type="initiator methionine" description="Removed" evidence="13">
    <location>
        <position position="1"/>
    </location>
</feature>
<feature type="chain" id="PRO_0000143066" description="Bcl-2-like protein 2">
    <location>
        <begin position="2"/>
        <end position="193"/>
    </location>
</feature>
<feature type="short sequence motif" description="BH4">
    <location>
        <begin position="9"/>
        <end position="29"/>
    </location>
</feature>
<feature type="short sequence motif" description="BH1">
    <location>
        <begin position="85"/>
        <end position="104"/>
    </location>
</feature>
<feature type="short sequence motif" description="BH2">
    <location>
        <begin position="136"/>
        <end position="151"/>
    </location>
</feature>
<feature type="modified residue" description="N-acetylalanine" evidence="13">
    <location>
        <position position="2"/>
    </location>
</feature>
<feature type="splice variant" id="VSP_042064" description="In isoform 3." evidence="10">
    <original>AEFTALYGDGALEEARRLREGNWASVRTVLTGAVALGALVTVGAFFASK</original>
    <variation>ELEAIKARVREMEEEAEKLKELQNEVEKQMNMSPPPGNAGPVIMSIEEKMEADARSIYVGNVDYGATAEELEAHFHGCGSVNRVTILCDKFSGHPKGFAYIEFSDKESVRTSLALDESLFRGRQIKVIPKRTNRPGISTTDRGFPRARYRARTTNYNSSRSRFYSGFNSRPRGRVYRGRARATSWYSPY</variation>
    <location>
        <begin position="145"/>
        <end position="193"/>
    </location>
</feature>
<feature type="sequence variant" id="VAR_048418" description="In dbSNP:rs910332." evidence="4 5 6 7 8 9">
    <original>Q</original>
    <variation>R</variation>
    <location>
        <position position="133"/>
    </location>
</feature>
<feature type="helix" evidence="21">
    <location>
        <begin position="10"/>
        <end position="24"/>
    </location>
</feature>
<feature type="strand" evidence="21">
    <location>
        <begin position="30"/>
        <end position="32"/>
    </location>
</feature>
<feature type="strand" evidence="21">
    <location>
        <begin position="35"/>
        <end position="37"/>
    </location>
</feature>
<feature type="helix" evidence="21">
    <location>
        <begin position="41"/>
        <end position="60"/>
    </location>
</feature>
<feature type="helix" evidence="21">
    <location>
        <begin position="65"/>
        <end position="67"/>
    </location>
</feature>
<feature type="turn" evidence="20">
    <location>
        <begin position="68"/>
        <end position="70"/>
    </location>
</feature>
<feature type="turn" evidence="21">
    <location>
        <begin position="72"/>
        <end position="74"/>
    </location>
</feature>
<feature type="helix" evidence="21">
    <location>
        <begin position="75"/>
        <end position="86"/>
    </location>
</feature>
<feature type="turn" evidence="21">
    <location>
        <begin position="87"/>
        <end position="89"/>
    </location>
</feature>
<feature type="helix" evidence="21">
    <location>
        <begin position="93"/>
        <end position="112"/>
    </location>
</feature>
<feature type="helix" evidence="21">
    <location>
        <begin position="117"/>
        <end position="133"/>
    </location>
</feature>
<feature type="helix" evidence="21">
    <location>
        <begin position="135"/>
        <end position="140"/>
    </location>
</feature>
<feature type="helix" evidence="21">
    <location>
        <begin position="144"/>
        <end position="151"/>
    </location>
</feature>
<feature type="helix" evidence="19">
    <location>
        <begin position="156"/>
        <end position="168"/>
    </location>
</feature>
<feature type="turn" evidence="20">
    <location>
        <begin position="171"/>
        <end position="176"/>
    </location>
</feature>
<feature type="modified residue" description="Phosphoserine" evidence="12 14 15 16">
    <location sequence="Q92843-2">
        <position position="177"/>
    </location>
</feature>
<feature type="modified residue" description="Phosphoserine" evidence="18">
    <location sequence="Q92843-2">
        <position position="262"/>
    </location>
</feature>
<feature type="modified residue" description="Omega-N-methylarginine" evidence="17">
    <location sequence="Q92843-2">
        <position position="286"/>
    </location>
</feature>
<feature type="modified residue" description="Omega-N-methylarginine" evidence="17">
    <location sequence="Q92843-2">
        <position position="290"/>
    </location>
</feature>
<dbReference type="EMBL" id="U59747">
    <property type="protein sequence ID" value="AAB09055.1"/>
    <property type="molecule type" value="mRNA"/>
</dbReference>
<dbReference type="EMBL" id="D87461">
    <property type="protein sequence ID" value="BAA19666.2"/>
    <property type="status" value="ALT_INIT"/>
    <property type="molecule type" value="mRNA"/>
</dbReference>
<dbReference type="EMBL" id="BT019549">
    <property type="protein sequence ID" value="AAV38356.1"/>
    <property type="molecule type" value="mRNA"/>
</dbReference>
<dbReference type="EMBL" id="AK289519">
    <property type="protein sequence ID" value="BAF82208.1"/>
    <property type="molecule type" value="mRNA"/>
</dbReference>
<dbReference type="EMBL" id="AL049829">
    <property type="status" value="NOT_ANNOTATED_CDS"/>
    <property type="molecule type" value="Genomic_DNA"/>
</dbReference>
<dbReference type="EMBL" id="CH471078">
    <property type="protein sequence ID" value="EAW66169.1"/>
    <property type="molecule type" value="Genomic_DNA"/>
</dbReference>
<dbReference type="EMBL" id="BC011637">
    <property type="status" value="NOT_ANNOTATED_CDS"/>
    <property type="molecule type" value="mRNA"/>
</dbReference>
<dbReference type="EMBL" id="BC021198">
    <property type="protein sequence ID" value="AAH21198.1"/>
    <property type="molecule type" value="mRNA"/>
</dbReference>
<dbReference type="EMBL" id="BC104789">
    <property type="protein sequence ID" value="AAI04790.1"/>
    <property type="molecule type" value="mRNA"/>
</dbReference>
<dbReference type="EMBL" id="BC113522">
    <property type="protein sequence ID" value="AAI13523.1"/>
    <property type="molecule type" value="mRNA"/>
</dbReference>
<dbReference type="CCDS" id="CCDS9591.1">
    <molecule id="Q92843-1"/>
</dbReference>
<dbReference type="RefSeq" id="NP_001186768.2">
    <molecule id="Q92843-1"/>
    <property type="nucleotide sequence ID" value="NM_001199839.2"/>
</dbReference>
<dbReference type="RefSeq" id="NP_004041.2">
    <molecule id="Q92843-1"/>
    <property type="nucleotide sequence ID" value="NM_004050.5"/>
</dbReference>
<dbReference type="PDB" id="1MK3">
    <property type="method" value="NMR"/>
    <property type="chains" value="A=2-171"/>
</dbReference>
<dbReference type="PDB" id="1O0L">
    <property type="method" value="NMR"/>
    <property type="chains" value="A=1-183"/>
</dbReference>
<dbReference type="PDB" id="1ZY3">
    <property type="method" value="NMR"/>
    <property type="chains" value="A=2-171"/>
</dbReference>
<dbReference type="PDB" id="2Y6W">
    <property type="method" value="X-ray"/>
    <property type="resolution" value="2.00 A"/>
    <property type="chains" value="A/B=1-164"/>
</dbReference>
<dbReference type="PDB" id="4CIM">
    <property type="method" value="X-ray"/>
    <property type="resolution" value="1.50 A"/>
    <property type="chains" value="A/B=1-163, P/Q=38-58"/>
</dbReference>
<dbReference type="PDBsum" id="1MK3"/>
<dbReference type="PDBsum" id="1O0L"/>
<dbReference type="PDBsum" id="1ZY3"/>
<dbReference type="PDBsum" id="2Y6W"/>
<dbReference type="PDBsum" id="4CIM"/>
<dbReference type="SMR" id="Q92843"/>
<dbReference type="BioGRID" id="107071">
    <property type="interactions" value="83"/>
</dbReference>
<dbReference type="ComplexPortal" id="CPX-309">
    <property type="entry name" value="BIK:BCL-w complex"/>
</dbReference>
<dbReference type="DIP" id="DIP-33700N"/>
<dbReference type="FunCoup" id="Q92843">
    <property type="interactions" value="130"/>
</dbReference>
<dbReference type="IntAct" id="Q92843">
    <property type="interactions" value="75"/>
</dbReference>
<dbReference type="MINT" id="Q92843"/>
<dbReference type="STRING" id="9606.ENSP00000250405"/>
<dbReference type="BindingDB" id="Q92843"/>
<dbReference type="ChEMBL" id="CHEMBL4677"/>
<dbReference type="DrugBank" id="DB12340">
    <property type="generic name" value="Navitoclax"/>
</dbReference>
<dbReference type="DrugCentral" id="Q92843"/>
<dbReference type="GuidetoPHARMACOLOGY" id="2846"/>
<dbReference type="TCDB" id="1.A.21.1.5">
    <property type="family name" value="the bcl-2 (bcl-2) family"/>
</dbReference>
<dbReference type="GlyGen" id="Q92843">
    <property type="glycosylation" value="1 site"/>
</dbReference>
<dbReference type="iPTMnet" id="Q92843"/>
<dbReference type="PhosphoSitePlus" id="Q92843"/>
<dbReference type="SwissPalm" id="Q92843"/>
<dbReference type="BioMuta" id="BCL2L2-PABPN1"/>
<dbReference type="DMDM" id="296434404"/>
<dbReference type="jPOST" id="Q92843"/>
<dbReference type="MassIVE" id="Q92843"/>
<dbReference type="PaxDb" id="9606-ENSP00000250405"/>
<dbReference type="PeptideAtlas" id="Q92843"/>
<dbReference type="ProteomicsDB" id="75535">
    <molecule id="Q92843-1"/>
</dbReference>
<dbReference type="ProteomicsDB" id="75536">
    <molecule id="Q92843-2"/>
</dbReference>
<dbReference type="Pumba" id="Q92843"/>
<dbReference type="Antibodypedia" id="3670">
    <property type="antibodies" value="445 antibodies from 38 providers"/>
</dbReference>
<dbReference type="CPTC" id="Q92843">
    <property type="antibodies" value="3 antibodies"/>
</dbReference>
<dbReference type="DNASU" id="599"/>
<dbReference type="Ensembl" id="ENST00000250405.10">
    <molecule id="Q92843-1"/>
    <property type="protein sequence ID" value="ENSP00000250405.6"/>
    <property type="gene ID" value="ENSG00000129473.11"/>
</dbReference>
<dbReference type="Ensembl" id="ENST00000553781.5">
    <molecule id="Q92843-2"/>
    <property type="protein sequence ID" value="ENSP00000451320.1"/>
    <property type="gene ID" value="ENSG00000258643.6"/>
</dbReference>
<dbReference type="Ensembl" id="ENST00000556100.3">
    <molecule id="Q92843-1"/>
    <property type="protein sequence ID" value="ENSP00000503091.1"/>
    <property type="gene ID" value="ENSG00000129473.11"/>
</dbReference>
<dbReference type="Ensembl" id="ENST00000557008.2">
    <molecule id="Q92843-2"/>
    <property type="protein sequence ID" value="ENSP00000452479.1"/>
    <property type="gene ID" value="ENSG00000258643.6"/>
</dbReference>
<dbReference type="Ensembl" id="ENST00000678311.1">
    <molecule id="Q92843-1"/>
    <property type="protein sequence ID" value="ENSP00000504570.1"/>
    <property type="gene ID" value="ENSG00000129473.11"/>
</dbReference>
<dbReference type="Ensembl" id="ENST00000679000.1">
    <molecule id="Q92843-1"/>
    <property type="protein sequence ID" value="ENSP00000503368.1"/>
    <property type="gene ID" value="ENSG00000129473.11"/>
</dbReference>
<dbReference type="Ensembl" id="ENST00000679219.1">
    <molecule id="Q92843-1"/>
    <property type="protein sequence ID" value="ENSP00000503012.1"/>
    <property type="gene ID" value="ENSG00000129473.11"/>
</dbReference>
<dbReference type="GeneID" id="599"/>
<dbReference type="KEGG" id="hsa:599"/>
<dbReference type="MANE-Select" id="ENST00000250405.10">
    <property type="protein sequence ID" value="ENSP00000250405.6"/>
    <property type="RefSeq nucleotide sequence ID" value="NM_004050.5"/>
    <property type="RefSeq protein sequence ID" value="NP_004041.2"/>
</dbReference>
<dbReference type="UCSC" id="uc001wjg.4">
    <molecule id="Q92843-1"/>
    <property type="organism name" value="human"/>
</dbReference>
<dbReference type="AGR" id="HGNC:995"/>
<dbReference type="CTD" id="599"/>
<dbReference type="DisGeNET" id="599"/>
<dbReference type="GeneCards" id="BCL2L2"/>
<dbReference type="GeneCards" id="BCL2L2-PABPN1"/>
<dbReference type="HGNC" id="HGNC:995">
    <property type="gene designation" value="BCL2L2"/>
</dbReference>
<dbReference type="HGNC" id="HGNC:42959">
    <property type="gene designation" value="BCL2L2-PABPN1"/>
</dbReference>
<dbReference type="HPA" id="ENSG00000129473">
    <property type="expression patterns" value="Low tissue specificity"/>
</dbReference>
<dbReference type="HPA" id="ENSG00000258643">
    <property type="expression patterns" value="Low tissue specificity"/>
</dbReference>
<dbReference type="MalaCards" id="BCL2L2"/>
<dbReference type="MalaCards" id="BCL2L2-PABPN1"/>
<dbReference type="MIM" id="601931">
    <property type="type" value="gene"/>
</dbReference>
<dbReference type="neXtProt" id="NX_Q92843"/>
<dbReference type="OpenTargets" id="ENSG00000129473"/>
<dbReference type="OpenTargets" id="ENSG00000258643"/>
<dbReference type="PharmGKB" id="PA25307"/>
<dbReference type="VEuPathDB" id="HostDB:ENSG00000129473"/>
<dbReference type="VEuPathDB" id="HostDB:ENSG00000258643"/>
<dbReference type="eggNOG" id="KOG4728">
    <property type="taxonomic scope" value="Eukaryota"/>
</dbReference>
<dbReference type="GeneTree" id="ENSGT01130000278332"/>
<dbReference type="HOGENOM" id="CLU_834081_0_0_1"/>
<dbReference type="InParanoid" id="Q92843"/>
<dbReference type="OMA" id="WMVVYLE"/>
<dbReference type="OrthoDB" id="4726at2759"/>
<dbReference type="PAN-GO" id="Q92843">
    <property type="GO annotations" value="6 GO annotations based on evolutionary models"/>
</dbReference>
<dbReference type="PhylomeDB" id="Q92843"/>
<dbReference type="TreeFam" id="TF105907"/>
<dbReference type="TreeFam" id="TF315834"/>
<dbReference type="PathwayCommons" id="Q92843"/>
<dbReference type="SignaLink" id="Q92843"/>
<dbReference type="SIGNOR" id="Q92843"/>
<dbReference type="BioGRID-ORCS" id="599">
    <property type="hits" value="27 hits in 1141 CRISPR screens"/>
</dbReference>
<dbReference type="EvolutionaryTrace" id="Q92843"/>
<dbReference type="GeneWiki" id="BCL2L2"/>
<dbReference type="GenomeRNAi" id="599"/>
<dbReference type="Pharos" id="Q92843">
    <property type="development level" value="Tchem"/>
</dbReference>
<dbReference type="Proteomes" id="UP000005640">
    <property type="component" value="Chromosome 14"/>
</dbReference>
<dbReference type="RNAct" id="Q92843">
    <property type="molecule type" value="protein"/>
</dbReference>
<dbReference type="Bgee" id="ENSG00000129473">
    <property type="expression patterns" value="Expressed in C1 segment of cervical spinal cord and 192 other cell types or tissues"/>
</dbReference>
<dbReference type="ExpressionAtlas" id="Q92843">
    <property type="expression patterns" value="baseline and differential"/>
</dbReference>
<dbReference type="GO" id="GO:0097136">
    <property type="term" value="C:Bcl-2 family protein complex"/>
    <property type="evidence" value="ECO:0000315"/>
    <property type="project" value="CAFA"/>
</dbReference>
<dbReference type="GO" id="GO:0005829">
    <property type="term" value="C:cytosol"/>
    <property type="evidence" value="ECO:0007669"/>
    <property type="project" value="Ensembl"/>
</dbReference>
<dbReference type="GO" id="GO:0005741">
    <property type="term" value="C:mitochondrial outer membrane"/>
    <property type="evidence" value="ECO:0000318"/>
    <property type="project" value="GO_Central"/>
</dbReference>
<dbReference type="GO" id="GO:0005739">
    <property type="term" value="C:mitochondrion"/>
    <property type="evidence" value="ECO:0006056"/>
    <property type="project" value="FlyBase"/>
</dbReference>
<dbReference type="GO" id="GO:0015267">
    <property type="term" value="F:channel activity"/>
    <property type="evidence" value="ECO:0000318"/>
    <property type="project" value="GO_Central"/>
</dbReference>
<dbReference type="GO" id="GO:0097718">
    <property type="term" value="F:disordered domain specific binding"/>
    <property type="evidence" value="ECO:0000353"/>
    <property type="project" value="CAFA"/>
</dbReference>
<dbReference type="GO" id="GO:0042802">
    <property type="term" value="F:identical protein binding"/>
    <property type="evidence" value="ECO:0000353"/>
    <property type="project" value="IntAct"/>
</dbReference>
<dbReference type="GO" id="GO:0097192">
    <property type="term" value="P:extrinsic apoptotic signaling pathway in absence of ligand"/>
    <property type="evidence" value="ECO:0000318"/>
    <property type="project" value="GO_Central"/>
</dbReference>
<dbReference type="GO" id="GO:0008630">
    <property type="term" value="P:intrinsic apoptotic signaling pathway in response to DNA damage"/>
    <property type="evidence" value="ECO:0000318"/>
    <property type="project" value="GO_Central"/>
</dbReference>
<dbReference type="GO" id="GO:0043066">
    <property type="term" value="P:negative regulation of apoptotic process"/>
    <property type="evidence" value="ECO:0000315"/>
    <property type="project" value="UniProtKB"/>
</dbReference>
<dbReference type="GO" id="GO:0043065">
    <property type="term" value="P:positive regulation of apoptotic process"/>
    <property type="evidence" value="ECO:0000318"/>
    <property type="project" value="GO_Central"/>
</dbReference>
<dbReference type="GO" id="GO:0042981">
    <property type="term" value="P:regulation of apoptotic process"/>
    <property type="evidence" value="ECO:0000314"/>
    <property type="project" value="ComplexPortal"/>
</dbReference>
<dbReference type="GO" id="GO:0001836">
    <property type="term" value="P:release of cytochrome c from mitochondria"/>
    <property type="evidence" value="ECO:0000318"/>
    <property type="project" value="GO_Central"/>
</dbReference>
<dbReference type="GO" id="GO:0060011">
    <property type="term" value="P:Sertoli cell proliferation"/>
    <property type="evidence" value="ECO:0007669"/>
    <property type="project" value="Ensembl"/>
</dbReference>
<dbReference type="GO" id="GO:0007283">
    <property type="term" value="P:spermatogenesis"/>
    <property type="evidence" value="ECO:0000304"/>
    <property type="project" value="ProtInc"/>
</dbReference>
<dbReference type="CDD" id="cd06845">
    <property type="entry name" value="Bcl-2_like"/>
    <property type="match status" value="1"/>
</dbReference>
<dbReference type="FunFam" id="1.10.437.10:FF:000001">
    <property type="entry name" value="Bcl-2-like protein 2"/>
    <property type="match status" value="1"/>
</dbReference>
<dbReference type="Gene3D" id="1.10.437.10">
    <property type="entry name" value="Blc2-like"/>
    <property type="match status" value="1"/>
</dbReference>
<dbReference type="InterPro" id="IPR013280">
    <property type="entry name" value="Apop_reg_BclW"/>
</dbReference>
<dbReference type="InterPro" id="IPR036834">
    <property type="entry name" value="Bcl-2-like_sf"/>
</dbReference>
<dbReference type="InterPro" id="IPR046371">
    <property type="entry name" value="Bcl-2_BH1-3"/>
</dbReference>
<dbReference type="InterPro" id="IPR026298">
    <property type="entry name" value="Bcl-2_fam"/>
</dbReference>
<dbReference type="InterPro" id="IPR002475">
    <property type="entry name" value="Bcl2-like"/>
</dbReference>
<dbReference type="InterPro" id="IPR020717">
    <property type="entry name" value="Bcl2_BH1_motif_CS"/>
</dbReference>
<dbReference type="InterPro" id="IPR020726">
    <property type="entry name" value="Bcl2_BH2_motif_CS"/>
</dbReference>
<dbReference type="InterPro" id="IPR003093">
    <property type="entry name" value="Bcl2_BH4"/>
</dbReference>
<dbReference type="InterPro" id="IPR020731">
    <property type="entry name" value="Bcl2_BH4_motif_CS"/>
</dbReference>
<dbReference type="PANTHER" id="PTHR11256">
    <property type="entry name" value="BCL-2 RELATED"/>
    <property type="match status" value="1"/>
</dbReference>
<dbReference type="PANTHER" id="PTHR11256:SF13">
    <property type="entry name" value="BCL-2-LIKE PROTEIN 2"/>
    <property type="match status" value="1"/>
</dbReference>
<dbReference type="Pfam" id="PF00452">
    <property type="entry name" value="Bcl-2"/>
    <property type="match status" value="1"/>
</dbReference>
<dbReference type="Pfam" id="PF02180">
    <property type="entry name" value="BH4"/>
    <property type="match status" value="1"/>
</dbReference>
<dbReference type="PRINTS" id="PR01865">
    <property type="entry name" value="APOPREGBCLW"/>
</dbReference>
<dbReference type="PRINTS" id="PR01862">
    <property type="entry name" value="BCL2FAMILY"/>
</dbReference>
<dbReference type="SMART" id="SM00337">
    <property type="entry name" value="BCL"/>
    <property type="match status" value="1"/>
</dbReference>
<dbReference type="SMART" id="SM00265">
    <property type="entry name" value="BH4"/>
    <property type="match status" value="1"/>
</dbReference>
<dbReference type="SUPFAM" id="SSF56854">
    <property type="entry name" value="Bcl-2 inhibitors of programmed cell death"/>
    <property type="match status" value="1"/>
</dbReference>
<dbReference type="PROSITE" id="PS50062">
    <property type="entry name" value="BCL2_FAMILY"/>
    <property type="match status" value="1"/>
</dbReference>
<dbReference type="PROSITE" id="PS01080">
    <property type="entry name" value="BH1"/>
    <property type="match status" value="1"/>
</dbReference>
<dbReference type="PROSITE" id="PS01258">
    <property type="entry name" value="BH2"/>
    <property type="match status" value="1"/>
</dbReference>
<dbReference type="PROSITE" id="PS01260">
    <property type="entry name" value="BH4_1"/>
    <property type="match status" value="1"/>
</dbReference>
<dbReference type="PROSITE" id="PS50063">
    <property type="entry name" value="BH4_2"/>
    <property type="match status" value="1"/>
</dbReference>
<accession>Q92843</accession>
<accession>A8K0F4</accession>
<accession>Q2M3U0</accession>
<accession>Q5U0H4</accession>
<comment type="function">
    <text evidence="6">Promotes cell survival. Blocks dexamethasone-induced apoptosis. Mediates survival of postmitotic Sertoli cells by suppressing death-promoting activity of BAX.</text>
</comment>
<comment type="subunit">
    <text evidence="1">Interacts with HIF3A (via C-terminus domain). Interacts with BOP.</text>
</comment>
<comment type="interaction">
    <interactant intactId="EBI-707714">
        <id>Q92843</id>
    </interactant>
    <interactant intactId="EBI-7054139">
        <id>Q68DC2</id>
        <label>ANKS6</label>
    </interactant>
    <organismsDiffer>false</organismsDiffer>
    <experiments>3</experiments>
</comment>
<comment type="interaction">
    <interactant intactId="EBI-707714">
        <id>Q92843</id>
    </interactant>
    <interactant intactId="EBI-1220105">
        <id>P02654</id>
        <label>APOC1</label>
    </interactant>
    <organismsDiffer>false</organismsDiffer>
    <experiments>3</experiments>
</comment>
<comment type="interaction">
    <interactant intactId="EBI-707714">
        <id>Q92843</id>
    </interactant>
    <interactant intactId="EBI-18302142">
        <id>P55056</id>
        <label>APOC4</label>
    </interactant>
    <organismsDiffer>false</organismsDiffer>
    <experiments>3</experiments>
</comment>
<comment type="interaction">
    <interactant intactId="EBI-707714">
        <id>Q92843</id>
    </interactant>
    <interactant intactId="EBI-2606700">
        <id>P18859</id>
        <label>ATP5PF</label>
    </interactant>
    <organismsDiffer>false</organismsDiffer>
    <experiments>3</experiments>
</comment>
<comment type="interaction">
    <interactant intactId="EBI-707714">
        <id>Q92843</id>
    </interactant>
    <interactant intactId="EBI-700771">
        <id>Q92934</id>
        <label>BAD</label>
    </interactant>
    <organismsDiffer>false</organismsDiffer>
    <experiments>7</experiments>
</comment>
<comment type="interaction">
    <interactant intactId="EBI-707714">
        <id>Q92843</id>
    </interactant>
    <interactant intactId="EBI-519866">
        <id>Q16611</id>
        <label>BAK1</label>
    </interactant>
    <organismsDiffer>false</organismsDiffer>
    <experiments>8</experiments>
</comment>
<comment type="interaction">
    <interactant intactId="EBI-707714">
        <id>Q92843</id>
    </interactant>
    <interactant intactId="EBI-516580">
        <id>Q07812</id>
        <label>BAX</label>
    </interactant>
    <organismsDiffer>false</organismsDiffer>
    <experiments>7</experiments>
</comment>
<comment type="interaction">
    <interactant intactId="EBI-707714">
        <id>Q92843</id>
    </interactant>
    <interactant intactId="EBI-519884">
        <id>Q9BXH1</id>
        <label>BBC3</label>
    </interactant>
    <organismsDiffer>false</organismsDiffer>
    <experiments>3</experiments>
</comment>
<comment type="interaction">
    <interactant intactId="EBI-707714">
        <id>Q92843</id>
    </interactant>
    <interactant intactId="EBI-526406">
        <id>O43521</id>
        <label>BCL2L11</label>
    </interactant>
    <organismsDiffer>false</organismsDiffer>
    <experiments>10</experiments>
</comment>
<comment type="interaction">
    <interactant intactId="EBI-707714">
        <id>Q92843</id>
    </interactant>
    <interactant intactId="EBI-707714">
        <id>Q92843</id>
        <label>BCL2L2</label>
    </interactant>
    <organismsDiffer>false</organismsDiffer>
    <experiments>3</experiments>
</comment>
<comment type="interaction">
    <interactant intactId="EBI-707714">
        <id>Q92843</id>
    </interactant>
    <interactant intactId="EBI-17508719">
        <id>Q7RTU4</id>
        <label>BHLHA9</label>
    </interactant>
    <organismsDiffer>false</organismsDiffer>
    <experiments>3</experiments>
</comment>
<comment type="interaction">
    <interactant intactId="EBI-707714">
        <id>Q92843</id>
    </interactant>
    <interactant intactId="EBI-519672">
        <id>P55957</id>
        <label>BID</label>
    </interactant>
    <organismsDiffer>false</organismsDiffer>
    <experiments>7</experiments>
</comment>
<comment type="interaction">
    <interactant intactId="EBI-707714">
        <id>Q92843</id>
    </interactant>
    <interactant intactId="EBI-700794">
        <id>Q13323</id>
        <label>BIK</label>
    </interactant>
    <organismsDiffer>false</organismsDiffer>
    <experiments>22</experiments>
</comment>
<comment type="interaction">
    <interactant intactId="EBI-707714">
        <id>Q92843</id>
    </interactant>
    <interactant intactId="EBI-3919268">
        <id>Q96LC9</id>
        <label>BMF</label>
    </interactant>
    <organismsDiffer>false</organismsDiffer>
    <experiments>13</experiments>
</comment>
<comment type="interaction">
    <interactant intactId="EBI-707714">
        <id>Q92843</id>
    </interactant>
    <interactant intactId="EBI-12806802">
        <id>P0C671</id>
        <label>BNIP5</label>
    </interactant>
    <organismsDiffer>false</organismsDiffer>
    <experiments>3</experiments>
</comment>
<comment type="interaction">
    <interactant intactId="EBI-707714">
        <id>Q92843</id>
    </interactant>
    <interactant intactId="EBI-13381098">
        <id>Q8IYJ2-2</id>
        <label>C10orf67</label>
    </interactant>
    <organismsDiffer>false</organismsDiffer>
    <experiments>3</experiments>
</comment>
<comment type="interaction">
    <interactant intactId="EBI-707714">
        <id>Q92843</id>
    </interactant>
    <interactant intactId="EBI-7797864">
        <id>P11912</id>
        <label>CD79A</label>
    </interactant>
    <organismsDiffer>false</organismsDiffer>
    <experiments>3</experiments>
</comment>
<comment type="interaction">
    <interactant intactId="EBI-707714">
        <id>Q92843</id>
    </interactant>
    <interactant intactId="EBI-17447707">
        <id>Q9H9P2</id>
        <label>CHODL</label>
    </interactant>
    <organismsDiffer>false</organismsDiffer>
    <experiments>3</experiments>
</comment>
<comment type="interaction">
    <interactant intactId="EBI-707714">
        <id>Q92843</id>
    </interactant>
    <interactant intactId="EBI-7062247">
        <id>Q9UHD4</id>
        <label>CIDEB</label>
    </interactant>
    <organismsDiffer>false</organismsDiffer>
    <experiments>3</experiments>
</comment>
<comment type="interaction">
    <interactant intactId="EBI-707714">
        <id>Q92843</id>
    </interactant>
    <interactant intactId="EBI-1045797">
        <id>Q8N5K1</id>
        <label>CISD2</label>
    </interactant>
    <organismsDiffer>false</organismsDiffer>
    <experiments>3</experiments>
</comment>
<comment type="interaction">
    <interactant intactId="EBI-707714">
        <id>Q92843</id>
    </interactant>
    <interactant intactId="EBI-740744">
        <id>O95471</id>
        <label>CLDN7</label>
    </interactant>
    <organismsDiffer>false</organismsDiffer>
    <experiments>3</experiments>
</comment>
<comment type="interaction">
    <interactant intactId="EBI-707714">
        <id>Q92843</id>
    </interactant>
    <interactant intactId="EBI-781551">
        <id>Q9Y282</id>
        <label>ERGIC3</label>
    </interactant>
    <organismsDiffer>false</organismsDiffer>
    <experiments>3</experiments>
</comment>
<comment type="interaction">
    <interactant intactId="EBI-707714">
        <id>Q92843</id>
    </interactant>
    <interactant intactId="EBI-17973325">
        <id>P60508</id>
        <label>ERVFRD-1</label>
    </interactant>
    <organismsDiffer>false</organismsDiffer>
    <experiments>3</experiments>
</comment>
<comment type="interaction">
    <interactant intactId="EBI-707714">
        <id>Q92843</id>
    </interactant>
    <interactant intactId="EBI-743099">
        <id>Q969F0</id>
        <label>FATE1</label>
    </interactant>
    <organismsDiffer>false</organismsDiffer>
    <experiments>6</experiments>
</comment>
<comment type="interaction">
    <interactant intactId="EBI-707714">
        <id>Q92843</id>
    </interactant>
    <interactant intactId="EBI-12836320">
        <id>Q92915-2</id>
        <label>FGF14</label>
    </interactant>
    <organismsDiffer>false</organismsDiffer>
    <experiments>3</experiments>
</comment>
<comment type="interaction">
    <interactant intactId="EBI-707714">
        <id>Q92843</id>
    </interactant>
    <interactant intactId="EBI-3939849">
        <id>P27469</id>
        <label>G0S2</label>
    </interactant>
    <organismsDiffer>false</organismsDiffer>
    <experiments>3</experiments>
</comment>
<comment type="interaction">
    <interactant intactId="EBI-707714">
        <id>Q92843</id>
    </interactant>
    <interactant intactId="EBI-3917143">
        <id>Q5T7V8</id>
        <label>GORAB</label>
    </interactant>
    <organismsDiffer>false</organismsDiffer>
    <experiments>3</experiments>
</comment>
<comment type="interaction">
    <interactant intactId="EBI-707714">
        <id>Q92843</id>
    </interactant>
    <interactant intactId="EBI-11955647">
        <id>Q8TDV0</id>
        <label>GPR151</label>
    </interactant>
    <organismsDiffer>false</organismsDiffer>
    <experiments>3</experiments>
</comment>
<comment type="interaction">
    <interactant intactId="EBI-707714">
        <id>Q92843</id>
    </interactant>
    <interactant intactId="EBI-11721746">
        <id>Q8TED1</id>
        <label>GPX8</label>
    </interactant>
    <organismsDiffer>false</organismsDiffer>
    <experiments>3</experiments>
</comment>
<comment type="interaction">
    <interactant intactId="EBI-707714">
        <id>Q92843</id>
    </interactant>
    <interactant intactId="EBI-749265">
        <id>Q8N6L0</id>
        <label>KASH5</label>
    </interactant>
    <organismsDiffer>false</organismsDiffer>
    <experiments>8</experiments>
</comment>
<comment type="interaction">
    <interactant intactId="EBI-707714">
        <id>Q92843</id>
    </interactant>
    <interactant intactId="EBI-12017638">
        <id>P48051</id>
        <label>KCNJ6</label>
    </interactant>
    <organismsDiffer>false</organismsDiffer>
    <experiments>3</experiments>
</comment>
<comment type="interaction">
    <interactant intactId="EBI-707714">
        <id>Q92843</id>
    </interactant>
    <interactant intactId="EBI-2830349">
        <id>Q7Z4F1</id>
        <label>LRP10</label>
    </interactant>
    <organismsDiffer>false</organismsDiffer>
    <experiments>3</experiments>
</comment>
<comment type="interaction">
    <interactant intactId="EBI-707714">
        <id>Q92843</id>
    </interactant>
    <interactant intactId="EBI-11324706">
        <id>Q99735</id>
        <label>MGST2</label>
    </interactant>
    <organismsDiffer>false</organismsDiffer>
    <experiments>3</experiments>
</comment>
<comment type="interaction">
    <interactant intactId="EBI-707714">
        <id>Q92843</id>
    </interactant>
    <interactant intactId="EBI-17263240">
        <id>P15941-11</id>
        <label>MUC1</label>
    </interactant>
    <organismsDiffer>false</organismsDiffer>
    <experiments>3</experiments>
</comment>
<comment type="interaction">
    <interactant intactId="EBI-707714">
        <id>Q92843</id>
    </interactant>
    <interactant intactId="EBI-7037612">
        <id>Q96RD7</id>
        <label>PANX1</label>
    </interactant>
    <organismsDiffer>false</organismsDiffer>
    <experiments>3</experiments>
</comment>
<comment type="interaction">
    <interactant intactId="EBI-707714">
        <id>Q92843</id>
    </interactant>
    <interactant intactId="EBI-17589229">
        <id>Q6NTF9-3</id>
        <label>RHBDD2</label>
    </interactant>
    <organismsDiffer>false</organismsDiffer>
    <experiments>3</experiments>
</comment>
<comment type="interaction">
    <interactant intactId="EBI-707714">
        <id>Q92843</id>
    </interactant>
    <interactant intactId="EBI-10697720">
        <id>Q7L3V2</id>
        <label>RTL10</label>
    </interactant>
    <organismsDiffer>false</organismsDiffer>
    <experiments>5</experiments>
</comment>
<comment type="interaction">
    <interactant intactId="EBI-707714">
        <id>Q92843</id>
    </interactant>
    <interactant intactId="EBI-3920694">
        <id>Q9NR31</id>
        <label>SAR1A</label>
    </interactant>
    <organismsDiffer>false</organismsDiffer>
    <experiments>3</experiments>
</comment>
<comment type="interaction">
    <interactant intactId="EBI-707714">
        <id>Q92843</id>
    </interactant>
    <interactant intactId="EBI-1046170">
        <id>O95470</id>
        <label>SGPL1</label>
    </interactant>
    <organismsDiffer>false</organismsDiffer>
    <experiments>3</experiments>
</comment>
<comment type="interaction">
    <interactant intactId="EBI-707714">
        <id>Q92843</id>
    </interactant>
    <interactant intactId="EBI-17295964">
        <id>Q9NQQ7-3</id>
        <label>SLC35C2</label>
    </interactant>
    <organismsDiffer>false</organismsDiffer>
    <experiments>3</experiments>
</comment>
<comment type="interaction">
    <interactant intactId="EBI-707714">
        <id>Q92843</id>
    </interactant>
    <interactant intactId="EBI-13389236">
        <id>Q7Z769</id>
        <label>SLC35E3</label>
    </interactant>
    <organismsDiffer>false</organismsDiffer>
    <experiments>3</experiments>
</comment>
<comment type="interaction">
    <interactant intactId="EBI-707714">
        <id>Q92843</id>
    </interactant>
    <interactant intactId="EBI-12898013">
        <id>Q9NP94</id>
        <label>SLC39A2</label>
    </interactant>
    <organismsDiffer>false</organismsDiffer>
    <experiments>3</experiments>
</comment>
<comment type="interaction">
    <interactant intactId="EBI-707714">
        <id>Q92843</id>
    </interactant>
    <interactant intactId="EBI-12956703">
        <id>Q13433-2</id>
        <label>SLC39A6</label>
    </interactant>
    <organismsDiffer>false</organismsDiffer>
    <experiments>3</experiments>
</comment>
<comment type="interaction">
    <interactant intactId="EBI-707714">
        <id>Q92843</id>
    </interactant>
    <interactant intactId="EBI-1211440">
        <id>P27105</id>
        <label>STOM</label>
    </interactant>
    <organismsDiffer>false</organismsDiffer>
    <experiments>3</experiments>
</comment>
<comment type="interaction">
    <interactant intactId="EBI-707714">
        <id>Q92843</id>
    </interactant>
    <interactant intactId="EBI-18194029">
        <id>Q96L08</id>
        <label>SUSD3</label>
    </interactant>
    <organismsDiffer>false</organismsDiffer>
    <experiments>3</experiments>
</comment>
<comment type="interaction">
    <interactant intactId="EBI-707714">
        <id>Q92843</id>
    </interactant>
    <interactant intactId="EBI-533224">
        <id>P15884</id>
        <label>TCF4</label>
    </interactant>
    <organismsDiffer>false</organismsDiffer>
    <experiments>3</experiments>
</comment>
<comment type="interaction">
    <interactant intactId="EBI-707714">
        <id>Q92843</id>
    </interactant>
    <interactant intactId="EBI-11523345">
        <id>Q8IYF3-3</id>
        <label>TEX11</label>
    </interactant>
    <organismsDiffer>false</organismsDiffer>
    <experiments>3</experiments>
</comment>
<comment type="interaction">
    <interactant intactId="EBI-707714">
        <id>Q92843</id>
    </interactant>
    <interactant intactId="EBI-7238458">
        <id>Q8IV31</id>
        <label>TMEM139</label>
    </interactant>
    <organismsDiffer>false</organismsDiffer>
    <experiments>3</experiments>
</comment>
<comment type="interaction">
    <interactant intactId="EBI-707714">
        <id>Q92843</id>
    </interactant>
    <interactant intactId="EBI-11724423">
        <id>Q7Z7N9</id>
        <label>TMEM179B</label>
    </interactant>
    <organismsDiffer>false</organismsDiffer>
    <experiments>3</experiments>
</comment>
<comment type="interaction">
    <interactant intactId="EBI-707714">
        <id>Q92843</id>
    </interactant>
    <interactant intactId="EBI-1051115">
        <id>Q9H3N1</id>
        <label>TMX1</label>
    </interactant>
    <organismsDiffer>false</organismsDiffer>
    <experiments>3</experiments>
</comment>
<comment type="interaction">
    <interactant intactId="EBI-707714">
        <id>Q92843</id>
    </interactant>
    <interactant intactId="EBI-77642">
        <id>Q13625</id>
        <label>TP53BP2</label>
    </interactant>
    <organismsDiffer>false</organismsDiffer>
    <experiments>4</experiments>
</comment>
<comment type="interaction">
    <interactant intactId="EBI-707714">
        <id>Q92843</id>
    </interactant>
    <interactant intactId="EBI-708032">
        <id>Q91ZE9</id>
        <label>Bmf</label>
    </interactant>
    <organismsDiffer>true</organismsDiffer>
    <experiments>2</experiments>
</comment>
<comment type="subcellular location">
    <subcellularLocation>
        <location evidence="2 3">Mitochondrion membrane</location>
        <topology evidence="2 3">Peripheral membrane protein</topology>
    </subcellularLocation>
    <text>Loosely associated with the mitochondrial membrane in healthy cells. During apoptosis, tightly bound to the membrane.</text>
</comment>
<comment type="alternative products">
    <event type="alternative splicing"/>
    <isoform>
        <id>Q92843-1</id>
        <name>1</name>
        <sequence type="displayed"/>
    </isoform>
    <isoform>
        <id>Q92843-2</id>
        <name>3</name>
        <name>BCL2L2-PABPN1</name>
        <sequence type="described" ref="VSP_042064"/>
    </isoform>
</comment>
<comment type="tissue specificity">
    <text evidence="2">Expressed (at protein level) in a wide range of tissues with highest levels in brain, spinal cord, testis, pancreas, heart, spleen and mammary glands. Moderate levels found in thymus, ovary and small intestine. Not detected in salivary gland, muscle or liver. Also expressed in cell lines of myeloid, fibroblast and epithelial origin. Not detected in most lymphoid cell lines.</text>
</comment>
<comment type="domain">
    <text>The BH4 motif seems to be involved in the anti-apoptotic function.</text>
</comment>
<comment type="domain">
    <text>The BH1 and BH2 motifs form a hydrophobic groove which acts as a docking site for the BH3 domain of some pro-apoptotic proteins. The C-terminal residues of BCL2L2 fold into the BH3-binding cleft and modulate pro-survival activity by regulating ligand access. When BH3 domain-containing proteins bind, they displace the C-terminus, allowing its insertion into the membrane and neutralizing the pro-survival activity of BCL2L2.</text>
</comment>
<comment type="miscellaneous">
    <molecule>Isoform 3</molecule>
    <text evidence="11">Based on a readthrough transcript which may produce a BCL2L2-PABPN1 fusion protein.</text>
</comment>
<comment type="similarity">
    <text evidence="11">Belongs to the Bcl-2 family.</text>
</comment>
<comment type="sequence caution" evidence="11">
    <conflict type="erroneous initiation">
        <sequence resource="EMBL-CDS" id="BAA19666"/>
    </conflict>
    <text>Extended N-terminus.</text>
</comment>
<gene>
    <name type="primary">BCL2L2</name>
    <name type="synonym">BCLW</name>
    <name type="synonym">KIAA0271</name>
</gene>
<keyword id="KW-0002">3D-structure</keyword>
<keyword id="KW-0007">Acetylation</keyword>
<keyword id="KW-0025">Alternative splicing</keyword>
<keyword id="KW-0053">Apoptosis</keyword>
<keyword id="KW-0472">Membrane</keyword>
<keyword id="KW-0488">Methylation</keyword>
<keyword id="KW-0496">Mitochondrion</keyword>
<keyword id="KW-0597">Phosphoprotein</keyword>
<keyword id="KW-1267">Proteomics identification</keyword>
<keyword id="KW-1185">Reference proteome</keyword>
<organism>
    <name type="scientific">Homo sapiens</name>
    <name type="common">Human</name>
    <dbReference type="NCBI Taxonomy" id="9606"/>
    <lineage>
        <taxon>Eukaryota</taxon>
        <taxon>Metazoa</taxon>
        <taxon>Chordata</taxon>
        <taxon>Craniata</taxon>
        <taxon>Vertebrata</taxon>
        <taxon>Euteleostomi</taxon>
        <taxon>Mammalia</taxon>
        <taxon>Eutheria</taxon>
        <taxon>Euarchontoglires</taxon>
        <taxon>Primates</taxon>
        <taxon>Haplorrhini</taxon>
        <taxon>Catarrhini</taxon>
        <taxon>Hominidae</taxon>
        <taxon>Homo</taxon>
    </lineage>
</organism>
<sequence>MATPASAPDTRALVADFVGYKLRQKGYVCGAGPGEGPAADPLHQAMRAAGDEFETRFRRTFSDLAAQLHVTPGSAQQRFTQVSDELFQGGPNWGRLVAFFVFGAALCAESVNKEMEPLVGQVQEWMVAYLETQLADWIHSSGGWAEFTALYGDGALEEARRLREGNWASVRTVLTGAVALGALVTVGAFFASK</sequence>
<protein>
    <recommendedName>
        <fullName>Bcl-2-like protein 2</fullName>
        <shortName>Bcl2-L-2</shortName>
    </recommendedName>
    <alternativeName>
        <fullName>Apoptosis regulator Bcl-W</fullName>
    </alternativeName>
</protein>
<reference key="1">
    <citation type="journal article" date="1996" name="Oncogene">
        <title>Bcl-w, a novel member of the Bcl-2 family, promotes cell survival.</title>
        <authorList>
            <person name="Gibson L."/>
            <person name="Holmgreen S.P."/>
            <person name="Huang D.C."/>
            <person name="Bernard O."/>
            <person name="Copeland N.G."/>
            <person name="Jenkins N.A."/>
            <person name="Sutherland G.R."/>
            <person name="Baker E."/>
            <person name="Adams J.M."/>
            <person name="Cory S."/>
        </authorList>
    </citation>
    <scope>NUCLEOTIDE SEQUENCE [MRNA] (ISOFORM 1)</scope>
    <scope>FUNCTION</scope>
    <scope>VARIANT ARG-133</scope>
</reference>
<reference key="2">
    <citation type="journal article" date="1996" name="DNA Res.">
        <title>Prediction of the coding sequences of unidentified human genes. VI. The coding sequences of 80 new genes (KIAA0201-KIAA0280) deduced by analysis of cDNA clones from cell line KG-1 and brain.</title>
        <authorList>
            <person name="Nagase T."/>
            <person name="Seki N."/>
            <person name="Ishikawa K."/>
            <person name="Ohira M."/>
            <person name="Kawarabayasi Y."/>
            <person name="Ohara O."/>
            <person name="Tanaka A."/>
            <person name="Kotani H."/>
            <person name="Miyajima N."/>
            <person name="Nomura N."/>
        </authorList>
    </citation>
    <scope>NUCLEOTIDE SEQUENCE [LARGE SCALE MRNA] (ISOFORM 1)</scope>
    <scope>VARIANT ARG-133</scope>
    <source>
        <tissue>Brain</tissue>
    </source>
</reference>
<reference key="3">
    <citation type="submission" date="2004-10" db="EMBL/GenBank/DDBJ databases">
        <title>Cloning of human full-length CDSs in BD Creator(TM) system donor vector.</title>
        <authorList>
            <person name="Kalnine N."/>
            <person name="Chen X."/>
            <person name="Rolfs A."/>
            <person name="Halleck A."/>
            <person name="Hines L."/>
            <person name="Eisenstein S."/>
            <person name="Koundinya M."/>
            <person name="Raphael J."/>
            <person name="Moreira D."/>
            <person name="Kelley T."/>
            <person name="LaBaer J."/>
            <person name="Lin Y."/>
            <person name="Phelan M."/>
            <person name="Farmer A."/>
        </authorList>
    </citation>
    <scope>NUCLEOTIDE SEQUENCE [LARGE SCALE MRNA] (ISOFORM 1)</scope>
    <scope>VARIANT ARG-133</scope>
</reference>
<reference key="4">
    <citation type="journal article" date="2004" name="Nat. Genet.">
        <title>Complete sequencing and characterization of 21,243 full-length human cDNAs.</title>
        <authorList>
            <person name="Ota T."/>
            <person name="Suzuki Y."/>
            <person name="Nishikawa T."/>
            <person name="Otsuki T."/>
            <person name="Sugiyama T."/>
            <person name="Irie R."/>
            <person name="Wakamatsu A."/>
            <person name="Hayashi K."/>
            <person name="Sato H."/>
            <person name="Nagai K."/>
            <person name="Kimura K."/>
            <person name="Makita H."/>
            <person name="Sekine M."/>
            <person name="Obayashi M."/>
            <person name="Nishi T."/>
            <person name="Shibahara T."/>
            <person name="Tanaka T."/>
            <person name="Ishii S."/>
            <person name="Yamamoto J."/>
            <person name="Saito K."/>
            <person name="Kawai Y."/>
            <person name="Isono Y."/>
            <person name="Nakamura Y."/>
            <person name="Nagahari K."/>
            <person name="Murakami K."/>
            <person name="Yasuda T."/>
            <person name="Iwayanagi T."/>
            <person name="Wagatsuma M."/>
            <person name="Shiratori A."/>
            <person name="Sudo H."/>
            <person name="Hosoiri T."/>
            <person name="Kaku Y."/>
            <person name="Kodaira H."/>
            <person name="Kondo H."/>
            <person name="Sugawara M."/>
            <person name="Takahashi M."/>
            <person name="Kanda K."/>
            <person name="Yokoi T."/>
            <person name="Furuya T."/>
            <person name="Kikkawa E."/>
            <person name="Omura Y."/>
            <person name="Abe K."/>
            <person name="Kamihara K."/>
            <person name="Katsuta N."/>
            <person name="Sato K."/>
            <person name="Tanikawa M."/>
            <person name="Yamazaki M."/>
            <person name="Ninomiya K."/>
            <person name="Ishibashi T."/>
            <person name="Yamashita H."/>
            <person name="Murakawa K."/>
            <person name="Fujimori K."/>
            <person name="Tanai H."/>
            <person name="Kimata M."/>
            <person name="Watanabe M."/>
            <person name="Hiraoka S."/>
            <person name="Chiba Y."/>
            <person name="Ishida S."/>
            <person name="Ono Y."/>
            <person name="Takiguchi S."/>
            <person name="Watanabe S."/>
            <person name="Yosida M."/>
            <person name="Hotuta T."/>
            <person name="Kusano J."/>
            <person name="Kanehori K."/>
            <person name="Takahashi-Fujii A."/>
            <person name="Hara H."/>
            <person name="Tanase T.-O."/>
            <person name="Nomura Y."/>
            <person name="Togiya S."/>
            <person name="Komai F."/>
            <person name="Hara R."/>
            <person name="Takeuchi K."/>
            <person name="Arita M."/>
            <person name="Imose N."/>
            <person name="Musashino K."/>
            <person name="Yuuki H."/>
            <person name="Oshima A."/>
            <person name="Sasaki N."/>
            <person name="Aotsuka S."/>
            <person name="Yoshikawa Y."/>
            <person name="Matsunawa H."/>
            <person name="Ichihara T."/>
            <person name="Shiohata N."/>
            <person name="Sano S."/>
            <person name="Moriya S."/>
            <person name="Momiyama H."/>
            <person name="Satoh N."/>
            <person name="Takami S."/>
            <person name="Terashima Y."/>
            <person name="Suzuki O."/>
            <person name="Nakagawa S."/>
            <person name="Senoh A."/>
            <person name="Mizoguchi H."/>
            <person name="Goto Y."/>
            <person name="Shimizu F."/>
            <person name="Wakebe H."/>
            <person name="Hishigaki H."/>
            <person name="Watanabe T."/>
            <person name="Sugiyama A."/>
            <person name="Takemoto M."/>
            <person name="Kawakami B."/>
            <person name="Yamazaki M."/>
            <person name="Watanabe K."/>
            <person name="Kumagai A."/>
            <person name="Itakura S."/>
            <person name="Fukuzumi Y."/>
            <person name="Fujimori Y."/>
            <person name="Komiyama M."/>
            <person name="Tashiro H."/>
            <person name="Tanigami A."/>
            <person name="Fujiwara T."/>
            <person name="Ono T."/>
            <person name="Yamada K."/>
            <person name="Fujii Y."/>
            <person name="Ozaki K."/>
            <person name="Hirao M."/>
            <person name="Ohmori Y."/>
            <person name="Kawabata A."/>
            <person name="Hikiji T."/>
            <person name="Kobatake N."/>
            <person name="Inagaki H."/>
            <person name="Ikema Y."/>
            <person name="Okamoto S."/>
            <person name="Okitani R."/>
            <person name="Kawakami T."/>
            <person name="Noguchi S."/>
            <person name="Itoh T."/>
            <person name="Shigeta K."/>
            <person name="Senba T."/>
            <person name="Matsumura K."/>
            <person name="Nakajima Y."/>
            <person name="Mizuno T."/>
            <person name="Morinaga M."/>
            <person name="Sasaki M."/>
            <person name="Togashi T."/>
            <person name="Oyama M."/>
            <person name="Hata H."/>
            <person name="Watanabe M."/>
            <person name="Komatsu T."/>
            <person name="Mizushima-Sugano J."/>
            <person name="Satoh T."/>
            <person name="Shirai Y."/>
            <person name="Takahashi Y."/>
            <person name="Nakagawa K."/>
            <person name="Okumura K."/>
            <person name="Nagase T."/>
            <person name="Nomura N."/>
            <person name="Kikuchi H."/>
            <person name="Masuho Y."/>
            <person name="Yamashita R."/>
            <person name="Nakai K."/>
            <person name="Yada T."/>
            <person name="Nakamura Y."/>
            <person name="Ohara O."/>
            <person name="Isogai T."/>
            <person name="Sugano S."/>
        </authorList>
    </citation>
    <scope>NUCLEOTIDE SEQUENCE [LARGE SCALE MRNA] (ISOFORM 1)</scope>
    <scope>VARIANT ARG-133</scope>
    <source>
        <tissue>Cerebellum</tissue>
    </source>
</reference>
<reference key="5">
    <citation type="journal article" date="2003" name="Nature">
        <title>The DNA sequence and analysis of human chromosome 14.</title>
        <authorList>
            <person name="Heilig R."/>
            <person name="Eckenberg R."/>
            <person name="Petit J.-L."/>
            <person name="Fonknechten N."/>
            <person name="Da Silva C."/>
            <person name="Cattolico L."/>
            <person name="Levy M."/>
            <person name="Barbe V."/>
            <person name="De Berardinis V."/>
            <person name="Ureta-Vidal A."/>
            <person name="Pelletier E."/>
            <person name="Vico V."/>
            <person name="Anthouard V."/>
            <person name="Rowen L."/>
            <person name="Madan A."/>
            <person name="Qin S."/>
            <person name="Sun H."/>
            <person name="Du H."/>
            <person name="Pepin K."/>
            <person name="Artiguenave F."/>
            <person name="Robert C."/>
            <person name="Cruaud C."/>
            <person name="Bruels T."/>
            <person name="Jaillon O."/>
            <person name="Friedlander L."/>
            <person name="Samson G."/>
            <person name="Brottier P."/>
            <person name="Cure S."/>
            <person name="Segurens B."/>
            <person name="Aniere F."/>
            <person name="Samain S."/>
            <person name="Crespeau H."/>
            <person name="Abbasi N."/>
            <person name="Aiach N."/>
            <person name="Boscus D."/>
            <person name="Dickhoff R."/>
            <person name="Dors M."/>
            <person name="Dubois I."/>
            <person name="Friedman C."/>
            <person name="Gouyvenoux M."/>
            <person name="James R."/>
            <person name="Madan A."/>
            <person name="Mairey-Estrada B."/>
            <person name="Mangenot S."/>
            <person name="Martins N."/>
            <person name="Menard M."/>
            <person name="Oztas S."/>
            <person name="Ratcliffe A."/>
            <person name="Shaffer T."/>
            <person name="Trask B."/>
            <person name="Vacherie B."/>
            <person name="Bellemere C."/>
            <person name="Belser C."/>
            <person name="Besnard-Gonnet M."/>
            <person name="Bartol-Mavel D."/>
            <person name="Boutard M."/>
            <person name="Briez-Silla S."/>
            <person name="Combette S."/>
            <person name="Dufosse-Laurent V."/>
            <person name="Ferron C."/>
            <person name="Lechaplais C."/>
            <person name="Louesse C."/>
            <person name="Muselet D."/>
            <person name="Magdelenat G."/>
            <person name="Pateau E."/>
            <person name="Petit E."/>
            <person name="Sirvain-Trukniewicz P."/>
            <person name="Trybou A."/>
            <person name="Vega-Czarny N."/>
            <person name="Bataille E."/>
            <person name="Bluet E."/>
            <person name="Bordelais I."/>
            <person name="Dubois M."/>
            <person name="Dumont C."/>
            <person name="Guerin T."/>
            <person name="Haffray S."/>
            <person name="Hammadi R."/>
            <person name="Muanga J."/>
            <person name="Pellouin V."/>
            <person name="Robert D."/>
            <person name="Wunderle E."/>
            <person name="Gauguet G."/>
            <person name="Roy A."/>
            <person name="Sainte-Marthe L."/>
            <person name="Verdier J."/>
            <person name="Verdier-Discala C."/>
            <person name="Hillier L.W."/>
            <person name="Fulton L."/>
            <person name="McPherson J."/>
            <person name="Matsuda F."/>
            <person name="Wilson R."/>
            <person name="Scarpelli C."/>
            <person name="Gyapay G."/>
            <person name="Wincker P."/>
            <person name="Saurin W."/>
            <person name="Quetier F."/>
            <person name="Waterston R."/>
            <person name="Hood L."/>
            <person name="Weissenbach J."/>
        </authorList>
    </citation>
    <scope>NUCLEOTIDE SEQUENCE [LARGE SCALE GENOMIC DNA]</scope>
</reference>
<reference key="6">
    <citation type="submission" date="2005-09" db="EMBL/GenBank/DDBJ databases">
        <authorList>
            <person name="Mural R.J."/>
            <person name="Istrail S."/>
            <person name="Sutton G.G."/>
            <person name="Florea L."/>
            <person name="Halpern A.L."/>
            <person name="Mobarry C.M."/>
            <person name="Lippert R."/>
            <person name="Walenz B."/>
            <person name="Shatkay H."/>
            <person name="Dew I."/>
            <person name="Miller J.R."/>
            <person name="Flanigan M.J."/>
            <person name="Edwards N.J."/>
            <person name="Bolanos R."/>
            <person name="Fasulo D."/>
            <person name="Halldorsson B.V."/>
            <person name="Hannenhalli S."/>
            <person name="Turner R."/>
            <person name="Yooseph S."/>
            <person name="Lu F."/>
            <person name="Nusskern D.R."/>
            <person name="Shue B.C."/>
            <person name="Zheng X.H."/>
            <person name="Zhong F."/>
            <person name="Delcher A.L."/>
            <person name="Huson D.H."/>
            <person name="Kravitz S.A."/>
            <person name="Mouchard L."/>
            <person name="Reinert K."/>
            <person name="Remington K.A."/>
            <person name="Clark A.G."/>
            <person name="Waterman M.S."/>
            <person name="Eichler E.E."/>
            <person name="Adams M.D."/>
            <person name="Hunkapiller M.W."/>
            <person name="Myers E.W."/>
            <person name="Venter J.C."/>
        </authorList>
    </citation>
    <scope>NUCLEOTIDE SEQUENCE [LARGE SCALE GENOMIC DNA]</scope>
    <scope>VARIANT ARG-133</scope>
</reference>
<reference key="7">
    <citation type="journal article" date="2004" name="Genome Res.">
        <title>The status, quality, and expansion of the NIH full-length cDNA project: the Mammalian Gene Collection (MGC).</title>
        <authorList>
            <consortium name="The MGC Project Team"/>
        </authorList>
    </citation>
    <scope>NUCLEOTIDE SEQUENCE [LARGE SCALE MRNA] (ISOFORMS 1 AND 3)</scope>
    <scope>VARIANT ARG-133</scope>
    <source>
        <tissue>Brain</tissue>
        <tissue>Lung</tissue>
        <tissue>Rhabdomyosarcoma</tissue>
    </source>
</reference>
<reference key="8">
    <citation type="journal article" date="2001" name="Cell Death Differ.">
        <title>Tissue expression and subcellular localization of the pro-survival molecule Bcl-w.</title>
        <authorList>
            <person name="O'Reilly L.A."/>
            <person name="Print C."/>
            <person name="Hausmann G."/>
            <person name="Moriishi K."/>
            <person name="Cory S."/>
            <person name="Huang D.C.S."/>
            <person name="Strasser A."/>
        </authorList>
    </citation>
    <scope>SUBCELLULAR LOCATION</scope>
    <scope>TISSUE SPECIFICITY</scope>
</reference>
<reference key="9">
    <citation type="journal article" date="2003" name="J. Cell Biol.">
        <title>Proapoptotic BH3-only proteins trigger membrane integration of prosurvival Bcl-w and neutralize its activity.</title>
        <authorList>
            <person name="Wilson-Annan J."/>
            <person name="O'Reilly L.A."/>
            <person name="Crawford S.A."/>
            <person name="Hausmann G."/>
            <person name="Beaumont J.G."/>
            <person name="Parma L.P."/>
            <person name="Chen L."/>
            <person name="Lackmann M."/>
            <person name="Lithgow T."/>
            <person name="Hinds M.G."/>
            <person name="Day C.L."/>
            <person name="Adams J.M."/>
            <person name="Huang D.C.S."/>
        </authorList>
    </citation>
    <scope>SUBCELLULAR LOCATION</scope>
</reference>
<reference key="10">
    <citation type="journal article" date="2008" name="Proc. Natl. Acad. Sci. U.S.A.">
        <title>A quantitative atlas of mitotic phosphorylation.</title>
        <authorList>
            <person name="Dephoure N."/>
            <person name="Zhou C."/>
            <person name="Villen J."/>
            <person name="Beausoleil S.A."/>
            <person name="Bakalarski C.E."/>
            <person name="Elledge S.J."/>
            <person name="Gygi S.P."/>
        </authorList>
    </citation>
    <scope>PHOSPHORYLATION [LARGE SCALE ANALYSIS] AT SER-177 (ISOFORM 3)</scope>
    <scope>IDENTIFICATION BY MASS SPECTROMETRY [LARGE SCALE ANALYSIS]</scope>
    <source>
        <tissue>Cervix carcinoma</tissue>
    </source>
</reference>
<reference key="11">
    <citation type="journal article" date="2009" name="Anal. Chem.">
        <title>Lys-N and trypsin cover complementary parts of the phosphoproteome in a refined SCX-based approach.</title>
        <authorList>
            <person name="Gauci S."/>
            <person name="Helbig A.O."/>
            <person name="Slijper M."/>
            <person name="Krijgsveld J."/>
            <person name="Heck A.J."/>
            <person name="Mohammed S."/>
        </authorList>
    </citation>
    <scope>ACETYLATION [LARGE SCALE ANALYSIS] AT ALA-2</scope>
    <scope>CLEAVAGE OF INITIATOR METHIONINE [LARGE SCALE ANALYSIS]</scope>
    <scope>IDENTIFICATION BY MASS SPECTROMETRY [LARGE SCALE ANALYSIS]</scope>
</reference>
<reference key="12">
    <citation type="journal article" date="2009" name="Sci. Signal.">
        <title>Quantitative phosphoproteomic analysis of T cell receptor signaling reveals system-wide modulation of protein-protein interactions.</title>
        <authorList>
            <person name="Mayya V."/>
            <person name="Lundgren D.H."/>
            <person name="Hwang S.-I."/>
            <person name="Rezaul K."/>
            <person name="Wu L."/>
            <person name="Eng J.K."/>
            <person name="Rodionov V."/>
            <person name="Han D.K."/>
        </authorList>
    </citation>
    <scope>PHOSPHORYLATION [LARGE SCALE ANALYSIS] AT SER-177 (ISOFORM 3)</scope>
    <scope>IDENTIFICATION BY MASS SPECTROMETRY [LARGE SCALE ANALYSIS]</scope>
    <source>
        <tissue>Leukemic T-cell</tissue>
    </source>
</reference>
<reference key="13">
    <citation type="journal article" date="2010" name="Sci. Signal.">
        <title>Quantitative phosphoproteomics reveals widespread full phosphorylation site occupancy during mitosis.</title>
        <authorList>
            <person name="Olsen J.V."/>
            <person name="Vermeulen M."/>
            <person name="Santamaria A."/>
            <person name="Kumar C."/>
            <person name="Miller M.L."/>
            <person name="Jensen L.J."/>
            <person name="Gnad F."/>
            <person name="Cox J."/>
            <person name="Jensen T.S."/>
            <person name="Nigg E.A."/>
            <person name="Brunak S."/>
            <person name="Mann M."/>
        </authorList>
    </citation>
    <scope>PHOSPHORYLATION [LARGE SCALE ANALYSIS] AT SER-177 (ISOFORM 3)</scope>
    <scope>IDENTIFICATION BY MASS SPECTROMETRY [LARGE SCALE ANALYSIS]</scope>
    <source>
        <tissue>Cervix carcinoma</tissue>
    </source>
</reference>
<reference key="14">
    <citation type="journal article" date="2011" name="BMC Syst. Biol.">
        <title>Initial characterization of the human central proteome.</title>
        <authorList>
            <person name="Burkard T.R."/>
            <person name="Planyavsky M."/>
            <person name="Kaupe I."/>
            <person name="Breitwieser F.P."/>
            <person name="Buerckstuemmer T."/>
            <person name="Bennett K.L."/>
            <person name="Superti-Furga G."/>
            <person name="Colinge J."/>
        </authorList>
    </citation>
    <scope>IDENTIFICATION BY MASS SPECTROMETRY [LARGE SCALE ANALYSIS]</scope>
</reference>
<reference key="15">
    <citation type="journal article" date="2013" name="J. Proteome Res.">
        <title>Toward a comprehensive characterization of a human cancer cell phosphoproteome.</title>
        <authorList>
            <person name="Zhou H."/>
            <person name="Di Palma S."/>
            <person name="Preisinger C."/>
            <person name="Peng M."/>
            <person name="Polat A.N."/>
            <person name="Heck A.J."/>
            <person name="Mohammed S."/>
        </authorList>
    </citation>
    <scope>PHOSPHORYLATION [LARGE SCALE ANALYSIS] AT SER-177 (ISOFORM 3)</scope>
    <scope>IDENTIFICATION BY MASS SPECTROMETRY [LARGE SCALE ANALYSIS]</scope>
    <source>
        <tissue>Cervix carcinoma</tissue>
        <tissue>Erythroleukemia</tissue>
    </source>
</reference>
<reference key="16">
    <citation type="journal article" date="2014" name="J. Proteomics">
        <title>An enzyme assisted RP-RPLC approach for in-depth analysis of human liver phosphoproteome.</title>
        <authorList>
            <person name="Bian Y."/>
            <person name="Song C."/>
            <person name="Cheng K."/>
            <person name="Dong M."/>
            <person name="Wang F."/>
            <person name="Huang J."/>
            <person name="Sun D."/>
            <person name="Wang L."/>
            <person name="Ye M."/>
            <person name="Zou H."/>
        </authorList>
    </citation>
    <scope>PHOSPHORYLATION [LARGE SCALE ANALYSIS] AT SER-262 (ISOFORM 3)</scope>
    <scope>IDENTIFICATION BY MASS SPECTROMETRY [LARGE SCALE ANALYSIS]</scope>
    <source>
        <tissue>Liver</tissue>
    </source>
</reference>
<reference key="17">
    <citation type="journal article" date="2014" name="Mol. Cell. Proteomics">
        <title>Immunoaffinity enrichment and mass spectrometry analysis of protein methylation.</title>
        <authorList>
            <person name="Guo A."/>
            <person name="Gu H."/>
            <person name="Zhou J."/>
            <person name="Mulhern D."/>
            <person name="Wang Y."/>
            <person name="Lee K.A."/>
            <person name="Yang V."/>
            <person name="Aguiar M."/>
            <person name="Kornhauser J."/>
            <person name="Jia X."/>
            <person name="Ren J."/>
            <person name="Beausoleil S.A."/>
            <person name="Silva J.C."/>
            <person name="Vemulapalli V."/>
            <person name="Bedford M.T."/>
            <person name="Comb M.J."/>
        </authorList>
    </citation>
    <scope>METHYLATION [LARGE SCALE ANALYSIS] AT ARG-286 AND ARG-290 (ISOFORM 3)</scope>
    <scope>IDENTIFICATION BY MASS SPECTROMETRY [LARGE SCALE ANALYSIS]</scope>
    <source>
        <tissue>Colon carcinoma</tissue>
    </source>
</reference>
<reference key="18">
    <citation type="journal article" date="2003" name="EMBO J.">
        <title>The structure of Bcl-w reveals a role for the C-terminal residues in modulating biological activity.</title>
        <authorList>
            <person name="Hinds M.G."/>
            <person name="Lackmann M."/>
            <person name="Skea G.L."/>
            <person name="Harrison P.J."/>
            <person name="Huang D.C.S."/>
            <person name="Day C.L."/>
        </authorList>
    </citation>
    <scope>STRUCTURE BY NMR OF 1-183</scope>
</reference>
<reference key="19">
    <citation type="journal article" date="2003" name="J. Biol. Chem.">
        <title>Solution structure of human BCL-w: modulation of ligand binding by the C-terminal helix.</title>
        <authorList>
            <person name="Denisov A.Y."/>
            <person name="Madiraju M.S.R."/>
            <person name="Chen G."/>
            <person name="Khadir A."/>
            <person name="Beauparlant P."/>
            <person name="Attardo G."/>
            <person name="Shore G.C."/>
            <person name="Gehring K."/>
        </authorList>
    </citation>
    <scope>STRUCTURE BY NMR OF 2-171</scope>
</reference>
<proteinExistence type="evidence at protein level"/>
<evidence type="ECO:0000250" key="1">
    <source>
        <dbReference type="UniProtKB" id="P70345"/>
    </source>
</evidence>
<evidence type="ECO:0000269" key="2">
    <source>
    </source>
</evidence>
<evidence type="ECO:0000269" key="3">
    <source>
    </source>
</evidence>
<evidence type="ECO:0000269" key="4">
    <source>
    </source>
</evidence>
<evidence type="ECO:0000269" key="5">
    <source>
    </source>
</evidence>
<evidence type="ECO:0000269" key="6">
    <source>
    </source>
</evidence>
<evidence type="ECO:0000269" key="7">
    <source>
    </source>
</evidence>
<evidence type="ECO:0000269" key="8">
    <source ref="3"/>
</evidence>
<evidence type="ECO:0000269" key="9">
    <source ref="6"/>
</evidence>
<evidence type="ECO:0000303" key="10">
    <source>
    </source>
</evidence>
<evidence type="ECO:0000305" key="11"/>
<evidence type="ECO:0007744" key="12">
    <source>
    </source>
</evidence>
<evidence type="ECO:0007744" key="13">
    <source>
    </source>
</evidence>
<evidence type="ECO:0007744" key="14">
    <source>
    </source>
</evidence>
<evidence type="ECO:0007744" key="15">
    <source>
    </source>
</evidence>
<evidence type="ECO:0007744" key="16">
    <source>
    </source>
</evidence>
<evidence type="ECO:0007744" key="17">
    <source>
    </source>
</evidence>
<evidence type="ECO:0007744" key="18">
    <source>
    </source>
</evidence>
<evidence type="ECO:0007829" key="19">
    <source>
        <dbReference type="PDB" id="1MK3"/>
    </source>
</evidence>
<evidence type="ECO:0007829" key="20">
    <source>
        <dbReference type="PDB" id="1O0L"/>
    </source>
</evidence>
<evidence type="ECO:0007829" key="21">
    <source>
        <dbReference type="PDB" id="4CIM"/>
    </source>
</evidence>
<name>B2CL2_HUMAN</name>